<proteinExistence type="inferred from homology"/>
<protein>
    <recommendedName>
        <fullName evidence="1">Small ribosomal subunit protein uS8</fullName>
    </recommendedName>
    <alternativeName>
        <fullName evidence="2">30S ribosomal protein S8</fullName>
    </alternativeName>
</protein>
<reference key="1">
    <citation type="submission" date="2008-05" db="EMBL/GenBank/DDBJ databases">
        <title>Complete sequence of Chlorobium limicola DSM 245.</title>
        <authorList>
            <consortium name="US DOE Joint Genome Institute"/>
            <person name="Lucas S."/>
            <person name="Copeland A."/>
            <person name="Lapidus A."/>
            <person name="Glavina del Rio T."/>
            <person name="Dalin E."/>
            <person name="Tice H."/>
            <person name="Bruce D."/>
            <person name="Goodwin L."/>
            <person name="Pitluck S."/>
            <person name="Schmutz J."/>
            <person name="Larimer F."/>
            <person name="Land M."/>
            <person name="Hauser L."/>
            <person name="Kyrpides N."/>
            <person name="Ovchinnikova G."/>
            <person name="Zhao F."/>
            <person name="Li T."/>
            <person name="Liu Z."/>
            <person name="Overmann J."/>
            <person name="Bryant D.A."/>
            <person name="Richardson P."/>
        </authorList>
    </citation>
    <scope>NUCLEOTIDE SEQUENCE [LARGE SCALE GENOMIC DNA]</scope>
    <source>
        <strain>DSM 245 / NBRC 103803 / 6330</strain>
    </source>
</reference>
<keyword id="KW-0687">Ribonucleoprotein</keyword>
<keyword id="KW-0689">Ribosomal protein</keyword>
<keyword id="KW-0694">RNA-binding</keyword>
<keyword id="KW-0699">rRNA-binding</keyword>
<dbReference type="EMBL" id="CP001097">
    <property type="protein sequence ID" value="ACD91239.1"/>
    <property type="molecule type" value="Genomic_DNA"/>
</dbReference>
<dbReference type="RefSeq" id="WP_012467106.1">
    <property type="nucleotide sequence ID" value="NC_010803.1"/>
</dbReference>
<dbReference type="SMR" id="B3EGX6"/>
<dbReference type="STRING" id="290315.Clim_2215"/>
<dbReference type="KEGG" id="cli:Clim_2215"/>
<dbReference type="eggNOG" id="COG0096">
    <property type="taxonomic scope" value="Bacteria"/>
</dbReference>
<dbReference type="HOGENOM" id="CLU_098428_0_2_10"/>
<dbReference type="OrthoDB" id="9802617at2"/>
<dbReference type="Proteomes" id="UP000008841">
    <property type="component" value="Chromosome"/>
</dbReference>
<dbReference type="GO" id="GO:1990904">
    <property type="term" value="C:ribonucleoprotein complex"/>
    <property type="evidence" value="ECO:0007669"/>
    <property type="project" value="UniProtKB-KW"/>
</dbReference>
<dbReference type="GO" id="GO:0005840">
    <property type="term" value="C:ribosome"/>
    <property type="evidence" value="ECO:0007669"/>
    <property type="project" value="UniProtKB-KW"/>
</dbReference>
<dbReference type="GO" id="GO:0019843">
    <property type="term" value="F:rRNA binding"/>
    <property type="evidence" value="ECO:0007669"/>
    <property type="project" value="UniProtKB-UniRule"/>
</dbReference>
<dbReference type="GO" id="GO:0003735">
    <property type="term" value="F:structural constituent of ribosome"/>
    <property type="evidence" value="ECO:0007669"/>
    <property type="project" value="InterPro"/>
</dbReference>
<dbReference type="GO" id="GO:0006412">
    <property type="term" value="P:translation"/>
    <property type="evidence" value="ECO:0007669"/>
    <property type="project" value="UniProtKB-UniRule"/>
</dbReference>
<dbReference type="FunFam" id="3.30.1490.10:FF:000001">
    <property type="entry name" value="30S ribosomal protein S8"/>
    <property type="match status" value="1"/>
</dbReference>
<dbReference type="Gene3D" id="3.30.1370.30">
    <property type="match status" value="1"/>
</dbReference>
<dbReference type="Gene3D" id="3.30.1490.10">
    <property type="match status" value="1"/>
</dbReference>
<dbReference type="HAMAP" id="MF_01302_B">
    <property type="entry name" value="Ribosomal_uS8_B"/>
    <property type="match status" value="1"/>
</dbReference>
<dbReference type="InterPro" id="IPR000630">
    <property type="entry name" value="Ribosomal_uS8"/>
</dbReference>
<dbReference type="InterPro" id="IPR047863">
    <property type="entry name" value="Ribosomal_uS8_CS"/>
</dbReference>
<dbReference type="InterPro" id="IPR035987">
    <property type="entry name" value="Ribosomal_uS8_sf"/>
</dbReference>
<dbReference type="NCBIfam" id="NF001109">
    <property type="entry name" value="PRK00136.1"/>
    <property type="match status" value="1"/>
</dbReference>
<dbReference type="PANTHER" id="PTHR11758">
    <property type="entry name" value="40S RIBOSOMAL PROTEIN S15A"/>
    <property type="match status" value="1"/>
</dbReference>
<dbReference type="Pfam" id="PF00410">
    <property type="entry name" value="Ribosomal_S8"/>
    <property type="match status" value="1"/>
</dbReference>
<dbReference type="SUPFAM" id="SSF56047">
    <property type="entry name" value="Ribosomal protein S8"/>
    <property type="match status" value="1"/>
</dbReference>
<dbReference type="PROSITE" id="PS00053">
    <property type="entry name" value="RIBOSOMAL_S8"/>
    <property type="match status" value="1"/>
</dbReference>
<accession>B3EGX6</accession>
<gene>
    <name evidence="1" type="primary">rpsH</name>
    <name type="ordered locus">Clim_2215</name>
</gene>
<sequence>MPVTDSIADYITRIRNAGRAKNKTTDIPYSKLRENISELLVAKGYIKSFTVITTEQFPFIRIDLKYSALGEPAIREITRVSKPGRRVYQGKDIRKYLGGLGLYILSSSKGIITDKEAREQGVGGEILFRIY</sequence>
<name>RS8_CHLL2</name>
<comment type="function">
    <text evidence="1">One of the primary rRNA binding proteins, it binds directly to 16S rRNA central domain where it helps coordinate assembly of the platform of the 30S subunit.</text>
</comment>
<comment type="subunit">
    <text evidence="1">Part of the 30S ribosomal subunit. Contacts proteins S5 and S12.</text>
</comment>
<comment type="similarity">
    <text evidence="1">Belongs to the universal ribosomal protein uS8 family.</text>
</comment>
<evidence type="ECO:0000255" key="1">
    <source>
        <dbReference type="HAMAP-Rule" id="MF_01302"/>
    </source>
</evidence>
<evidence type="ECO:0000305" key="2"/>
<feature type="chain" id="PRO_1000140528" description="Small ribosomal subunit protein uS8">
    <location>
        <begin position="1"/>
        <end position="131"/>
    </location>
</feature>
<organism>
    <name type="scientific">Chlorobium limicola (strain DSM 245 / NBRC 103803 / 6330)</name>
    <dbReference type="NCBI Taxonomy" id="290315"/>
    <lineage>
        <taxon>Bacteria</taxon>
        <taxon>Pseudomonadati</taxon>
        <taxon>Chlorobiota</taxon>
        <taxon>Chlorobiia</taxon>
        <taxon>Chlorobiales</taxon>
        <taxon>Chlorobiaceae</taxon>
        <taxon>Chlorobium/Pelodictyon group</taxon>
        <taxon>Chlorobium</taxon>
    </lineage>
</organism>